<name>KLF9_MOUSE</name>
<comment type="function">
    <text evidence="1">Transcription factor that binds to GC box promoter elements. Selectively activates mRNA synthesis from genes containing tandem repeats of GC boxes but represses genes with a single GC box. Acts as an epidermal circadian transcription factor regulating keratinocyte proliferation.</text>
</comment>
<comment type="subunit">
    <text evidence="1">Interacts with ZZEF1.</text>
</comment>
<comment type="subcellular location">
    <subcellularLocation>
        <location evidence="1">Nucleus</location>
    </subcellularLocation>
</comment>
<comment type="similarity">
    <text evidence="4">Belongs to the Sp1 C2H2-type zinc-finger protein family.</text>
</comment>
<dbReference type="EMBL" id="Y14296">
    <property type="protein sequence ID" value="CAA74671.1"/>
    <property type="molecule type" value="mRNA"/>
</dbReference>
<dbReference type="CCDS" id="CCDS29706.1"/>
<dbReference type="SMR" id="O35739"/>
<dbReference type="FunCoup" id="O35739">
    <property type="interactions" value="1076"/>
</dbReference>
<dbReference type="IntAct" id="O35739">
    <property type="interactions" value="2"/>
</dbReference>
<dbReference type="STRING" id="10090.ENSMUSP00000045639"/>
<dbReference type="iPTMnet" id="O35739"/>
<dbReference type="PhosphoSitePlus" id="O35739"/>
<dbReference type="PaxDb" id="10090-ENSMUSP00000045639"/>
<dbReference type="PeptideAtlas" id="O35739"/>
<dbReference type="ProteomicsDB" id="264769"/>
<dbReference type="AGR" id="MGI:1333856"/>
<dbReference type="MGI" id="MGI:1333856">
    <property type="gene designation" value="Klf9"/>
</dbReference>
<dbReference type="eggNOG" id="KOG1721">
    <property type="taxonomic scope" value="Eukaryota"/>
</dbReference>
<dbReference type="InParanoid" id="O35739"/>
<dbReference type="PhylomeDB" id="O35739"/>
<dbReference type="ChiTaRS" id="Klf9">
    <property type="organism name" value="mouse"/>
</dbReference>
<dbReference type="PRO" id="PR:O35739"/>
<dbReference type="Proteomes" id="UP000000589">
    <property type="component" value="Unplaced"/>
</dbReference>
<dbReference type="RNAct" id="O35739">
    <property type="molecule type" value="protein"/>
</dbReference>
<dbReference type="GO" id="GO:0005634">
    <property type="term" value="C:nucleus"/>
    <property type="evidence" value="ECO:0000314"/>
    <property type="project" value="MGI"/>
</dbReference>
<dbReference type="GO" id="GO:0003677">
    <property type="term" value="F:DNA binding"/>
    <property type="evidence" value="ECO:0000250"/>
    <property type="project" value="MGI"/>
</dbReference>
<dbReference type="GO" id="GO:0001228">
    <property type="term" value="F:DNA-binding transcription activator activity, RNA polymerase II-specific"/>
    <property type="evidence" value="ECO:0000314"/>
    <property type="project" value="NTNU_SB"/>
</dbReference>
<dbReference type="GO" id="GO:0003700">
    <property type="term" value="F:DNA-binding transcription factor activity"/>
    <property type="evidence" value="ECO:0000314"/>
    <property type="project" value="MGI"/>
</dbReference>
<dbReference type="GO" id="GO:0000977">
    <property type="term" value="F:RNA polymerase II transcription regulatory region sequence-specific DNA binding"/>
    <property type="evidence" value="ECO:0000314"/>
    <property type="project" value="NTNU_SB"/>
</dbReference>
<dbReference type="GO" id="GO:0008270">
    <property type="term" value="F:zinc ion binding"/>
    <property type="evidence" value="ECO:0007669"/>
    <property type="project" value="UniProtKB-KW"/>
</dbReference>
<dbReference type="GO" id="GO:0071387">
    <property type="term" value="P:cellular response to cortisol stimulus"/>
    <property type="evidence" value="ECO:0000250"/>
    <property type="project" value="UniProtKB"/>
</dbReference>
<dbReference type="GO" id="GO:0007566">
    <property type="term" value="P:embryo implantation"/>
    <property type="evidence" value="ECO:0000314"/>
    <property type="project" value="MGI"/>
</dbReference>
<dbReference type="GO" id="GO:0010839">
    <property type="term" value="P:negative regulation of keratinocyte proliferation"/>
    <property type="evidence" value="ECO:0000250"/>
    <property type="project" value="UniProtKB"/>
</dbReference>
<dbReference type="GO" id="GO:0045944">
    <property type="term" value="P:positive regulation of transcription by RNA polymerase II"/>
    <property type="evidence" value="ECO:0000314"/>
    <property type="project" value="NTNU_SB"/>
</dbReference>
<dbReference type="GO" id="GO:0050847">
    <property type="term" value="P:progesterone receptor signaling pathway"/>
    <property type="evidence" value="ECO:0000314"/>
    <property type="project" value="MGI"/>
</dbReference>
<dbReference type="GO" id="GO:0006355">
    <property type="term" value="P:regulation of DNA-templated transcription"/>
    <property type="evidence" value="ECO:0000314"/>
    <property type="project" value="MGI"/>
</dbReference>
<dbReference type="GO" id="GO:0048511">
    <property type="term" value="P:rhythmic process"/>
    <property type="evidence" value="ECO:0007669"/>
    <property type="project" value="UniProtKB-KW"/>
</dbReference>
<dbReference type="CDD" id="cd21578">
    <property type="entry name" value="KLF9_N"/>
    <property type="match status" value="1"/>
</dbReference>
<dbReference type="FunFam" id="3.30.160.60:FF:000018">
    <property type="entry name" value="Krueppel-like factor 15"/>
    <property type="match status" value="1"/>
</dbReference>
<dbReference type="FunFam" id="3.30.160.60:FF:000232">
    <property type="entry name" value="Krueppel-like factor 9"/>
    <property type="match status" value="1"/>
</dbReference>
<dbReference type="FunFam" id="3.30.160.60:FF:000521">
    <property type="entry name" value="Krueppel-like factor 9"/>
    <property type="match status" value="1"/>
</dbReference>
<dbReference type="Gene3D" id="3.30.160.60">
    <property type="entry name" value="Classic Zinc Finger"/>
    <property type="match status" value="3"/>
</dbReference>
<dbReference type="InterPro" id="IPR036236">
    <property type="entry name" value="Znf_C2H2_sf"/>
</dbReference>
<dbReference type="InterPro" id="IPR013087">
    <property type="entry name" value="Znf_C2H2_type"/>
</dbReference>
<dbReference type="PANTHER" id="PTHR23235:SF132">
    <property type="entry name" value="KRUEPPEL-LIKE FACTOR 9"/>
    <property type="match status" value="1"/>
</dbReference>
<dbReference type="PANTHER" id="PTHR23235">
    <property type="entry name" value="KRUEPPEL-LIKE TRANSCRIPTION FACTOR"/>
    <property type="match status" value="1"/>
</dbReference>
<dbReference type="Pfam" id="PF00096">
    <property type="entry name" value="zf-C2H2"/>
    <property type="match status" value="3"/>
</dbReference>
<dbReference type="SMART" id="SM00355">
    <property type="entry name" value="ZnF_C2H2"/>
    <property type="match status" value="3"/>
</dbReference>
<dbReference type="SUPFAM" id="SSF57667">
    <property type="entry name" value="beta-beta-alpha zinc fingers"/>
    <property type="match status" value="2"/>
</dbReference>
<dbReference type="PROSITE" id="PS00028">
    <property type="entry name" value="ZINC_FINGER_C2H2_1"/>
    <property type="match status" value="3"/>
</dbReference>
<dbReference type="PROSITE" id="PS50157">
    <property type="entry name" value="ZINC_FINGER_C2H2_2"/>
    <property type="match status" value="3"/>
</dbReference>
<proteinExistence type="evidence at transcript level"/>
<organism>
    <name type="scientific">Mus musculus</name>
    <name type="common">Mouse</name>
    <dbReference type="NCBI Taxonomy" id="10090"/>
    <lineage>
        <taxon>Eukaryota</taxon>
        <taxon>Metazoa</taxon>
        <taxon>Chordata</taxon>
        <taxon>Craniata</taxon>
        <taxon>Vertebrata</taxon>
        <taxon>Euteleostomi</taxon>
        <taxon>Mammalia</taxon>
        <taxon>Eutheria</taxon>
        <taxon>Euarchontoglires</taxon>
        <taxon>Glires</taxon>
        <taxon>Rodentia</taxon>
        <taxon>Myomorpha</taxon>
        <taxon>Muroidea</taxon>
        <taxon>Muridae</taxon>
        <taxon>Murinae</taxon>
        <taxon>Mus</taxon>
        <taxon>Mus</taxon>
    </lineage>
</organism>
<feature type="chain" id="PRO_0000047155" description="Krueppel-like factor 9">
    <location>
        <begin position="1"/>
        <end position="244"/>
    </location>
</feature>
<feature type="zinc finger region" description="C2H2-type 1" evidence="2">
    <location>
        <begin position="143"/>
        <end position="167"/>
    </location>
</feature>
<feature type="zinc finger region" description="C2H2-type 2" evidence="2">
    <location>
        <begin position="173"/>
        <end position="197"/>
    </location>
</feature>
<feature type="zinc finger region" description="C2H2-type 3" evidence="2">
    <location>
        <begin position="203"/>
        <end position="225"/>
    </location>
</feature>
<feature type="region of interest" description="Disordered" evidence="3">
    <location>
        <begin position="26"/>
        <end position="51"/>
    </location>
</feature>
<feature type="region of interest" description="Disordered" evidence="3">
    <location>
        <begin position="79"/>
        <end position="143"/>
    </location>
</feature>
<feature type="compositionally biased region" description="Basic and acidic residues" evidence="3">
    <location>
        <begin position="32"/>
        <end position="51"/>
    </location>
</feature>
<feature type="compositionally biased region" description="Basic residues" evidence="3">
    <location>
        <begin position="134"/>
        <end position="143"/>
    </location>
</feature>
<feature type="modified residue" description="Phosphoserine" evidence="1">
    <location>
        <position position="122"/>
    </location>
</feature>
<sequence length="244" mass="27170">MSAAAYMDFVAAQCLVSISNRAAVPEHGGAPEAERLRLPEREVTKEHGDPGDTWKDYCTLVTIAKSLLDLNKYRPIQTPSVCSDSLESPDEDIGSDSDVTTESGSSPSHSPEERQDSGSAPSPLSLLHSGVASKGKHASEKRHKCPYSGCGKVYGKSSHLKAHYRVHTGERPFPCTWPDCLKKFSRSDELTRHYRTHTGEKQFRCPLCEKRFMRSDHLTKHARRHTVFHPSMIKRSKKALACPL</sequence>
<keyword id="KW-0090">Biological rhythms</keyword>
<keyword id="KW-0238">DNA-binding</keyword>
<keyword id="KW-0479">Metal-binding</keyword>
<keyword id="KW-0539">Nucleus</keyword>
<keyword id="KW-0597">Phosphoprotein</keyword>
<keyword id="KW-1185">Reference proteome</keyword>
<keyword id="KW-0677">Repeat</keyword>
<keyword id="KW-0804">Transcription</keyword>
<keyword id="KW-0805">Transcription regulation</keyword>
<keyword id="KW-0862">Zinc</keyword>
<keyword id="KW-0863">Zinc-finger</keyword>
<accession>O35739</accession>
<evidence type="ECO:0000250" key="1">
    <source>
        <dbReference type="UniProtKB" id="Q13886"/>
    </source>
</evidence>
<evidence type="ECO:0000255" key="2">
    <source>
        <dbReference type="PROSITE-ProRule" id="PRU00042"/>
    </source>
</evidence>
<evidence type="ECO:0000256" key="3">
    <source>
        <dbReference type="SAM" id="MobiDB-lite"/>
    </source>
</evidence>
<evidence type="ECO:0000305" key="4"/>
<gene>
    <name type="primary">Klf9</name>
    <name type="synonym">Bteb</name>
    <name type="synonym">Bteb-1</name>
    <name type="synonym">Bteb1</name>
</gene>
<protein>
    <recommendedName>
        <fullName>Krueppel-like factor 9</fullName>
    </recommendedName>
    <alternativeName>
        <fullName>Basic transcription element-binding protein 1</fullName>
        <shortName>BTE-binding protein 1</shortName>
    </alternativeName>
    <alternativeName>
        <fullName>GC-box-binding protein 1</fullName>
    </alternativeName>
    <alternativeName>
        <fullName>Transcription factor BTEB1</fullName>
    </alternativeName>
</protein>
<reference key="1">
    <citation type="journal article" date="1999" name="Mol. Cell. Biol.">
        <title>Transcriptional regulation of the AP-2alpha promoter by BTEB-1 and AP-2rep, a novel wt-1/egr-related zinc finger repressor.</title>
        <authorList>
            <person name="Imhof A."/>
            <person name="Schuierer M."/>
            <person name="Werner O."/>
            <person name="Moser M."/>
            <person name="Roth C."/>
            <person name="Bauer R."/>
            <person name="Buettner R."/>
        </authorList>
    </citation>
    <scope>NUCLEOTIDE SEQUENCE [MRNA]</scope>
    <source>
        <strain>BALB/cJ</strain>
        <tissue>Brain</tissue>
    </source>
</reference>